<accession>A6TEY2</accession>
<proteinExistence type="inferred from homology"/>
<protein>
    <recommendedName>
        <fullName evidence="1">Protein TusC</fullName>
    </recommendedName>
    <alternativeName>
        <fullName evidence="1">tRNA 2-thiouridine synthesizing protein C</fullName>
    </alternativeName>
</protein>
<gene>
    <name evidence="1" type="primary">tusC</name>
    <name type="ordered locus">KPN78578_36920</name>
    <name type="ORF">KPN_03729</name>
</gene>
<name>TUSC_KLEP7</name>
<feature type="chain" id="PRO_1000013244" description="Protein TusC">
    <location>
        <begin position="1"/>
        <end position="119"/>
    </location>
</feature>
<reference key="1">
    <citation type="submission" date="2006-09" db="EMBL/GenBank/DDBJ databases">
        <authorList>
            <consortium name="The Klebsiella pneumonia Genome Sequencing Project"/>
            <person name="McClelland M."/>
            <person name="Sanderson E.K."/>
            <person name="Spieth J."/>
            <person name="Clifton W.S."/>
            <person name="Latreille P."/>
            <person name="Sabo A."/>
            <person name="Pepin K."/>
            <person name="Bhonagiri V."/>
            <person name="Porwollik S."/>
            <person name="Ali J."/>
            <person name="Wilson R.K."/>
        </authorList>
    </citation>
    <scope>NUCLEOTIDE SEQUENCE [LARGE SCALE GENOMIC DNA]</scope>
    <source>
        <strain>ATCC 700721 / MGH 78578</strain>
    </source>
</reference>
<evidence type="ECO:0000255" key="1">
    <source>
        <dbReference type="HAMAP-Rule" id="MF_00389"/>
    </source>
</evidence>
<keyword id="KW-0963">Cytoplasm</keyword>
<keyword id="KW-0819">tRNA processing</keyword>
<comment type="function">
    <text evidence="1">Part of a sulfur-relay system required for 2-thiolation of 5-methylaminomethyl-2-thiouridine (mnm(5)s(2)U) at tRNA wobble positions.</text>
</comment>
<comment type="subunit">
    <text evidence="1">Heterohexamer, formed by a dimer of trimers. The hexameric TusBCD complex contains 2 copies each of TusB, TusC and TusD. The TusBCD complex interacts with TusE.</text>
</comment>
<comment type="subcellular location">
    <subcellularLocation>
        <location evidence="1">Cytoplasm</location>
    </subcellularLocation>
</comment>
<comment type="similarity">
    <text evidence="1">Belongs to the DsrF/TusC family.</text>
</comment>
<dbReference type="EMBL" id="CP000647">
    <property type="protein sequence ID" value="ABR79116.1"/>
    <property type="molecule type" value="Genomic_DNA"/>
</dbReference>
<dbReference type="RefSeq" id="WP_004174061.1">
    <property type="nucleotide sequence ID" value="NC_009648.1"/>
</dbReference>
<dbReference type="SMR" id="A6TEY2"/>
<dbReference type="STRING" id="272620.KPN_03729"/>
<dbReference type="PaxDb" id="272620-KPN_03729"/>
<dbReference type="EnsemblBacteria" id="ABR79116">
    <property type="protein sequence ID" value="ABR79116"/>
    <property type="gene ID" value="KPN_03729"/>
</dbReference>
<dbReference type="KEGG" id="kpn:KPN_03729"/>
<dbReference type="HOGENOM" id="CLU_155943_1_0_6"/>
<dbReference type="Proteomes" id="UP000000265">
    <property type="component" value="Chromosome"/>
</dbReference>
<dbReference type="GO" id="GO:0005737">
    <property type="term" value="C:cytoplasm"/>
    <property type="evidence" value="ECO:0007669"/>
    <property type="project" value="UniProtKB-SubCell"/>
</dbReference>
<dbReference type="GO" id="GO:0008033">
    <property type="term" value="P:tRNA processing"/>
    <property type="evidence" value="ECO:0007669"/>
    <property type="project" value="UniProtKB-UniRule"/>
</dbReference>
<dbReference type="Gene3D" id="3.40.1260.10">
    <property type="entry name" value="DsrEFH-like"/>
    <property type="match status" value="1"/>
</dbReference>
<dbReference type="HAMAP" id="MF_00389">
    <property type="entry name" value="Thiourid_synth_C"/>
    <property type="match status" value="1"/>
</dbReference>
<dbReference type="InterPro" id="IPR027396">
    <property type="entry name" value="DsrEFH-like"/>
</dbReference>
<dbReference type="InterPro" id="IPR003787">
    <property type="entry name" value="Sulphur_relay_DsrE/F-like"/>
</dbReference>
<dbReference type="InterPro" id="IPR037450">
    <property type="entry name" value="Sulphur_relay_TusC"/>
</dbReference>
<dbReference type="InterPro" id="IPR017462">
    <property type="entry name" value="Sulphur_relay_TusC/DsrF"/>
</dbReference>
<dbReference type="NCBIfam" id="NF001238">
    <property type="entry name" value="PRK00211.1"/>
    <property type="match status" value="1"/>
</dbReference>
<dbReference type="NCBIfam" id="TIGR03010">
    <property type="entry name" value="sulf_tusC_dsrF"/>
    <property type="match status" value="1"/>
</dbReference>
<dbReference type="PANTHER" id="PTHR38780">
    <property type="entry name" value="PROTEIN TUSC"/>
    <property type="match status" value="1"/>
</dbReference>
<dbReference type="PANTHER" id="PTHR38780:SF1">
    <property type="entry name" value="PROTEIN TUSC"/>
    <property type="match status" value="1"/>
</dbReference>
<dbReference type="Pfam" id="PF02635">
    <property type="entry name" value="DsrE"/>
    <property type="match status" value="1"/>
</dbReference>
<dbReference type="SUPFAM" id="SSF75169">
    <property type="entry name" value="DsrEFH-like"/>
    <property type="match status" value="1"/>
</dbReference>
<sequence>MKRVAFVFSSAPHGSAAGREGLDALLATSALTDDIGVFFVGDGVFQLLPEQRPGAVLARDYIATFKLLSLYDIDQCWLCADSARERGLDPATPWVVDVECLAPDALRARLHEFDVILRF</sequence>
<organism>
    <name type="scientific">Klebsiella pneumoniae subsp. pneumoniae (strain ATCC 700721 / MGH 78578)</name>
    <dbReference type="NCBI Taxonomy" id="272620"/>
    <lineage>
        <taxon>Bacteria</taxon>
        <taxon>Pseudomonadati</taxon>
        <taxon>Pseudomonadota</taxon>
        <taxon>Gammaproteobacteria</taxon>
        <taxon>Enterobacterales</taxon>
        <taxon>Enterobacteriaceae</taxon>
        <taxon>Klebsiella/Raoultella group</taxon>
        <taxon>Klebsiella</taxon>
        <taxon>Klebsiella pneumoniae complex</taxon>
    </lineage>
</organism>